<sequence>MKERKSSKMPNNLPQLQNLIKRDSDSLIHTCFALSQFLQQLRHYQSNLQIFKLNPSHTSKVLQELVMFLCQVAHCYPGHLGSLPQELKDLLHKHHSVMDSDLRMTLCRALILLRNKDLISPTSILELFFELFRCNDKVLRQVLYTHIVTDIKNMNAKHKNNKVNSTLQNFMYTMLKDSNAVAAKKSLDVLIELYKRNVWKDAKTVNVITTACFSPVPKILVAALKFFLGSDEGSAGDDSDSESDVSYLKFEFLEMIMNSLASLLLPKHKKKHKQTSVNFSALHLINDPQGFSERLFKQLEASTGRFEVRIMLMNLISRLIGVHQLFVFNFYPFLQRYLQPHQREVTKLLMFFSQASHDLVPPEVVEPGVRTIVNNFVTERNSHEVMAVGLNAVREVCQRCPLVMTDTLLQDLAQYKTSKDKSVMMASQSLIQLFRSVNPNLLHKKDRGQPTESREDSKPLDYAAVEAKDYIPGAELINYANSTIILLYATLIPDGWETDEGCDDGSDEDGWIDVQHSSDEEQEDEDPSGENQEGEEDGQTRAARISQMRILTDEDFKKIRMKQLTKEVQPKLGKKRKRATTTEEPQGSRNELVALENIEGIYKKRKHDKASRLETVIAGRQDRPKYGTKKKAKMNEHAGTSNKEKRRKKNFMMMRHNKLVRGKTKRSFRDKQIALRDSLLKRKKSKI</sequence>
<organism>
    <name type="scientific">Nematostella vectensis</name>
    <name type="common">Starlet sea anemone</name>
    <dbReference type="NCBI Taxonomy" id="45351"/>
    <lineage>
        <taxon>Eukaryota</taxon>
        <taxon>Metazoa</taxon>
        <taxon>Cnidaria</taxon>
        <taxon>Anthozoa</taxon>
        <taxon>Hexacorallia</taxon>
        <taxon>Actiniaria</taxon>
        <taxon>Edwardsiidae</taxon>
        <taxon>Nematostella</taxon>
    </lineage>
</organism>
<comment type="function">
    <text evidence="1">Required for 60S pre-ribosomal subunits export to the cytoplasm.</text>
</comment>
<comment type="subcellular location">
    <subcellularLocation>
        <location evidence="1">Nucleus</location>
        <location evidence="1">Nucleolus</location>
    </subcellularLocation>
</comment>
<comment type="similarity">
    <text evidence="3">Belongs to the SDA1 family.</text>
</comment>
<proteinExistence type="inferred from homology"/>
<protein>
    <recommendedName>
        <fullName>Protein SDA1 homolog</fullName>
    </recommendedName>
    <alternativeName>
        <fullName>SDA1 domain-containing protein 1 homolog</fullName>
    </alternativeName>
</protein>
<dbReference type="EMBL" id="DS469586">
    <property type="protein sequence ID" value="EDO40827.1"/>
    <property type="molecule type" value="Genomic_DNA"/>
</dbReference>
<dbReference type="RefSeq" id="XP_001632890.1">
    <property type="nucleotide sequence ID" value="XM_001632840.1"/>
</dbReference>
<dbReference type="SMR" id="A7S6A5"/>
<dbReference type="STRING" id="45351.A7S6A5"/>
<dbReference type="EnsemblMetazoa" id="EDO40827">
    <property type="protein sequence ID" value="EDO40827"/>
    <property type="gene ID" value="NEMVEDRAFT_v1g106150"/>
</dbReference>
<dbReference type="eggNOG" id="KOG2229">
    <property type="taxonomic scope" value="Eukaryota"/>
</dbReference>
<dbReference type="HOGENOM" id="CLU_009161_3_1_1"/>
<dbReference type="InParanoid" id="A7S6A5"/>
<dbReference type="OMA" id="AMYKTYK"/>
<dbReference type="PhylomeDB" id="A7S6A5"/>
<dbReference type="Proteomes" id="UP000001593">
    <property type="component" value="Unassembled WGS sequence"/>
</dbReference>
<dbReference type="GO" id="GO:0005730">
    <property type="term" value="C:nucleolus"/>
    <property type="evidence" value="ECO:0000318"/>
    <property type="project" value="GO_Central"/>
</dbReference>
<dbReference type="GO" id="GO:0015031">
    <property type="term" value="P:protein transport"/>
    <property type="evidence" value="ECO:0007669"/>
    <property type="project" value="UniProtKB-KW"/>
</dbReference>
<dbReference type="GO" id="GO:0042273">
    <property type="term" value="P:ribosomal large subunit biogenesis"/>
    <property type="evidence" value="ECO:0000318"/>
    <property type="project" value="GO_Central"/>
</dbReference>
<dbReference type="GO" id="GO:0000055">
    <property type="term" value="P:ribosomal large subunit export from nucleus"/>
    <property type="evidence" value="ECO:0000318"/>
    <property type="project" value="GO_Central"/>
</dbReference>
<dbReference type="InterPro" id="IPR016024">
    <property type="entry name" value="ARM-type_fold"/>
</dbReference>
<dbReference type="InterPro" id="IPR027312">
    <property type="entry name" value="Sda1"/>
</dbReference>
<dbReference type="InterPro" id="IPR048292">
    <property type="entry name" value="SDA1_C"/>
</dbReference>
<dbReference type="InterPro" id="IPR007949">
    <property type="entry name" value="SDA1_MD"/>
</dbReference>
<dbReference type="InterPro" id="IPR012977">
    <property type="entry name" value="SDA1_N"/>
</dbReference>
<dbReference type="PANTHER" id="PTHR12730">
    <property type="entry name" value="HSDA/SDA1-RELATED"/>
    <property type="match status" value="1"/>
</dbReference>
<dbReference type="PANTHER" id="PTHR12730:SF0">
    <property type="entry name" value="PROTEIN SDA1 HOMOLOG"/>
    <property type="match status" value="1"/>
</dbReference>
<dbReference type="Pfam" id="PF21638">
    <property type="entry name" value="SDA1_C"/>
    <property type="match status" value="1"/>
</dbReference>
<dbReference type="Pfam" id="PF05285">
    <property type="entry name" value="SDA1_dom"/>
    <property type="match status" value="1"/>
</dbReference>
<dbReference type="Pfam" id="PF08158">
    <property type="entry name" value="SDA1_HEAT"/>
    <property type="match status" value="1"/>
</dbReference>
<dbReference type="SUPFAM" id="SSF48371">
    <property type="entry name" value="ARM repeat"/>
    <property type="match status" value="1"/>
</dbReference>
<evidence type="ECO:0000250" key="1"/>
<evidence type="ECO:0000256" key="2">
    <source>
        <dbReference type="SAM" id="MobiDB-lite"/>
    </source>
</evidence>
<evidence type="ECO:0000305" key="3"/>
<name>SDA1_NEMVE</name>
<gene>
    <name type="primary">sdad1</name>
    <name type="ORF">v1g106150</name>
</gene>
<feature type="chain" id="PRO_0000328432" description="Protein SDA1 homolog">
    <location>
        <begin position="1"/>
        <end position="687"/>
    </location>
</feature>
<feature type="region of interest" description="Disordered" evidence="2">
    <location>
        <begin position="517"/>
        <end position="549"/>
    </location>
</feature>
<feature type="region of interest" description="Disordered" evidence="2">
    <location>
        <begin position="561"/>
        <end position="587"/>
    </location>
</feature>
<feature type="region of interest" description="Disordered" evidence="2">
    <location>
        <begin position="615"/>
        <end position="687"/>
    </location>
</feature>
<feature type="compositionally biased region" description="Acidic residues" evidence="2">
    <location>
        <begin position="520"/>
        <end position="537"/>
    </location>
</feature>
<feature type="compositionally biased region" description="Basic residues" evidence="2">
    <location>
        <begin position="644"/>
        <end position="666"/>
    </location>
</feature>
<feature type="compositionally biased region" description="Basic and acidic residues" evidence="2">
    <location>
        <begin position="667"/>
        <end position="680"/>
    </location>
</feature>
<accession>A7S6A5</accession>
<reference key="1">
    <citation type="journal article" date="2007" name="Science">
        <title>Sea anemone genome reveals ancestral eumetazoan gene repertoire and genomic organization.</title>
        <authorList>
            <person name="Putnam N.H."/>
            <person name="Srivastava M."/>
            <person name="Hellsten U."/>
            <person name="Dirks B."/>
            <person name="Chapman J."/>
            <person name="Salamov A."/>
            <person name="Terry A."/>
            <person name="Shapiro H."/>
            <person name="Lindquist E."/>
            <person name="Kapitonov V.V."/>
            <person name="Jurka J."/>
            <person name="Genikhovich G."/>
            <person name="Grigoriev I.V."/>
            <person name="Lucas S.M."/>
            <person name="Steele R.E."/>
            <person name="Finnerty J.R."/>
            <person name="Technau U."/>
            <person name="Martindale M.Q."/>
            <person name="Rokhsar D.S."/>
        </authorList>
    </citation>
    <scope>NUCLEOTIDE SEQUENCE [LARGE SCALE GENOMIC DNA]</scope>
    <source>
        <strain>CH2 X CH6</strain>
    </source>
</reference>
<keyword id="KW-0539">Nucleus</keyword>
<keyword id="KW-0653">Protein transport</keyword>
<keyword id="KW-1185">Reference proteome</keyword>
<keyword id="KW-0690">Ribosome biogenesis</keyword>
<keyword id="KW-0813">Transport</keyword>